<sequence length="447" mass="50522">MDEEYDVIVLGTGLTECILSGIMSVNGKKVLHMDRNPYYGGESSSITPLEELYKRFQILEGPPESMGRGRDWNVDLIPKFLMANGQLVKMLLYTEVTRYLDFKVVEGSFVYKGGKIYKVPSTETEALASNLMGMFEKRRFRKFLVFVANFDENDPKTFEGVDPQNTSMRDVYRKFDLGQDVIDFTGHALALYRTDDYLDQPCLETINRIKLYSESLARYGKSPYLYPLYGLGELPQGFARLSAIYGGTYMLNKPVDDIIMENGKVVGVKSEGEVARCKQLICDPSYIPDRVQKAGQVIRIICILSHPIKNTNDANSCQIIIPQNQVNRKSDIYVCMISYAHNVAAQGKYIAIASTTVETAEPEKEVEPALELLEPIDQKFVAISDLYEPIDDGSESQVFCSCSYDATTHFETTCNDIKDIYKRMAGSAFDFENMKRKQNDVFGEADQ</sequence>
<accession>P50396</accession>
<accession>A2AMA8</accession>
<accession>Q3TBI9</accession>
<accession>Q8VHM3</accession>
<accession>Q91Y71</accession>
<accession>Q91Z41</accession>
<accession>Q96CX5</accession>
<reference key="1">
    <citation type="journal article" date="2000" name="Proc. Natl. Acad. Sci. U.S.A.">
        <title>Role of rab GDP dissociation inhibitor alpha in regulating plasticity of hippocampal neurotransmission.</title>
        <authorList>
            <person name="Ishizaki H."/>
            <person name="Miyoshi J."/>
            <person name="Kamiya H."/>
            <person name="Togawa A."/>
            <person name="Tanaka M."/>
            <person name="Sasaki T."/>
            <person name="Endo K."/>
            <person name="Mizoguchi A."/>
            <person name="Ozawa S."/>
            <person name="Takai Y."/>
        </authorList>
    </citation>
    <scope>NUCLEOTIDE SEQUENCE [MRNA]</scope>
    <source>
        <strain>C57BL/6J</strain>
        <tissue>Brain</tissue>
    </source>
</reference>
<reference key="2">
    <citation type="submission" date="2001-10" db="EMBL/GenBank/DDBJ databases">
        <title>Knockout mice carrying a deletion of the mental retardation gene Gdi1 show impaired associative memory and inappropriate social behavior.</title>
        <authorList>
            <person name="D'Adamo P."/>
            <person name="Welzl H."/>
            <person name="Papadimitriou S."/>
            <person name="Raffaele di Barletta M."/>
            <person name="Tiveron C."/>
            <person name="Tatangelo L."/>
            <person name="Chapman P.F."/>
            <person name="Knevett S.G."/>
            <person name="Ramsay M.F."/>
            <person name="Valtorta F."/>
            <person name="Leoni C."/>
            <person name="Menegon A."/>
            <person name="Wolfer D.P."/>
            <person name="Lipp H.-P."/>
            <person name="Toniolo D."/>
        </authorList>
    </citation>
    <scope>NUCLEOTIDE SEQUENCE [GENOMIC DNA]</scope>
    <source>
        <strain>129/SvEv</strain>
    </source>
</reference>
<reference key="3">
    <citation type="journal article" date="2005" name="Science">
        <title>The transcriptional landscape of the mammalian genome.</title>
        <authorList>
            <person name="Carninci P."/>
            <person name="Kasukawa T."/>
            <person name="Katayama S."/>
            <person name="Gough J."/>
            <person name="Frith M.C."/>
            <person name="Maeda N."/>
            <person name="Oyama R."/>
            <person name="Ravasi T."/>
            <person name="Lenhard B."/>
            <person name="Wells C."/>
            <person name="Kodzius R."/>
            <person name="Shimokawa K."/>
            <person name="Bajic V.B."/>
            <person name="Brenner S.E."/>
            <person name="Batalov S."/>
            <person name="Forrest A.R."/>
            <person name="Zavolan M."/>
            <person name="Davis M.J."/>
            <person name="Wilming L.G."/>
            <person name="Aidinis V."/>
            <person name="Allen J.E."/>
            <person name="Ambesi-Impiombato A."/>
            <person name="Apweiler R."/>
            <person name="Aturaliya R.N."/>
            <person name="Bailey T.L."/>
            <person name="Bansal M."/>
            <person name="Baxter L."/>
            <person name="Beisel K.W."/>
            <person name="Bersano T."/>
            <person name="Bono H."/>
            <person name="Chalk A.M."/>
            <person name="Chiu K.P."/>
            <person name="Choudhary V."/>
            <person name="Christoffels A."/>
            <person name="Clutterbuck D.R."/>
            <person name="Crowe M.L."/>
            <person name="Dalla E."/>
            <person name="Dalrymple B.P."/>
            <person name="de Bono B."/>
            <person name="Della Gatta G."/>
            <person name="di Bernardo D."/>
            <person name="Down T."/>
            <person name="Engstrom P."/>
            <person name="Fagiolini M."/>
            <person name="Faulkner G."/>
            <person name="Fletcher C.F."/>
            <person name="Fukushima T."/>
            <person name="Furuno M."/>
            <person name="Futaki S."/>
            <person name="Gariboldi M."/>
            <person name="Georgii-Hemming P."/>
            <person name="Gingeras T.R."/>
            <person name="Gojobori T."/>
            <person name="Green R.E."/>
            <person name="Gustincich S."/>
            <person name="Harbers M."/>
            <person name="Hayashi Y."/>
            <person name="Hensch T.K."/>
            <person name="Hirokawa N."/>
            <person name="Hill D."/>
            <person name="Huminiecki L."/>
            <person name="Iacono M."/>
            <person name="Ikeo K."/>
            <person name="Iwama A."/>
            <person name="Ishikawa T."/>
            <person name="Jakt M."/>
            <person name="Kanapin A."/>
            <person name="Katoh M."/>
            <person name="Kawasawa Y."/>
            <person name="Kelso J."/>
            <person name="Kitamura H."/>
            <person name="Kitano H."/>
            <person name="Kollias G."/>
            <person name="Krishnan S.P."/>
            <person name="Kruger A."/>
            <person name="Kummerfeld S.K."/>
            <person name="Kurochkin I.V."/>
            <person name="Lareau L.F."/>
            <person name="Lazarevic D."/>
            <person name="Lipovich L."/>
            <person name="Liu J."/>
            <person name="Liuni S."/>
            <person name="McWilliam S."/>
            <person name="Madan Babu M."/>
            <person name="Madera M."/>
            <person name="Marchionni L."/>
            <person name="Matsuda H."/>
            <person name="Matsuzawa S."/>
            <person name="Miki H."/>
            <person name="Mignone F."/>
            <person name="Miyake S."/>
            <person name="Morris K."/>
            <person name="Mottagui-Tabar S."/>
            <person name="Mulder N."/>
            <person name="Nakano N."/>
            <person name="Nakauchi H."/>
            <person name="Ng P."/>
            <person name="Nilsson R."/>
            <person name="Nishiguchi S."/>
            <person name="Nishikawa S."/>
            <person name="Nori F."/>
            <person name="Ohara O."/>
            <person name="Okazaki Y."/>
            <person name="Orlando V."/>
            <person name="Pang K.C."/>
            <person name="Pavan W.J."/>
            <person name="Pavesi G."/>
            <person name="Pesole G."/>
            <person name="Petrovsky N."/>
            <person name="Piazza S."/>
            <person name="Reed J."/>
            <person name="Reid J.F."/>
            <person name="Ring B.Z."/>
            <person name="Ringwald M."/>
            <person name="Rost B."/>
            <person name="Ruan Y."/>
            <person name="Salzberg S.L."/>
            <person name="Sandelin A."/>
            <person name="Schneider C."/>
            <person name="Schoenbach C."/>
            <person name="Sekiguchi K."/>
            <person name="Semple C.A."/>
            <person name="Seno S."/>
            <person name="Sessa L."/>
            <person name="Sheng Y."/>
            <person name="Shibata Y."/>
            <person name="Shimada H."/>
            <person name="Shimada K."/>
            <person name="Silva D."/>
            <person name="Sinclair B."/>
            <person name="Sperling S."/>
            <person name="Stupka E."/>
            <person name="Sugiura K."/>
            <person name="Sultana R."/>
            <person name="Takenaka Y."/>
            <person name="Taki K."/>
            <person name="Tammoja K."/>
            <person name="Tan S.L."/>
            <person name="Tang S."/>
            <person name="Taylor M.S."/>
            <person name="Tegner J."/>
            <person name="Teichmann S.A."/>
            <person name="Ueda H.R."/>
            <person name="van Nimwegen E."/>
            <person name="Verardo R."/>
            <person name="Wei C.L."/>
            <person name="Yagi K."/>
            <person name="Yamanishi H."/>
            <person name="Zabarovsky E."/>
            <person name="Zhu S."/>
            <person name="Zimmer A."/>
            <person name="Hide W."/>
            <person name="Bult C."/>
            <person name="Grimmond S.M."/>
            <person name="Teasdale R.D."/>
            <person name="Liu E.T."/>
            <person name="Brusic V."/>
            <person name="Quackenbush J."/>
            <person name="Wahlestedt C."/>
            <person name="Mattick J.S."/>
            <person name="Hume D.A."/>
            <person name="Kai C."/>
            <person name="Sasaki D."/>
            <person name="Tomaru Y."/>
            <person name="Fukuda S."/>
            <person name="Kanamori-Katayama M."/>
            <person name="Suzuki M."/>
            <person name="Aoki J."/>
            <person name="Arakawa T."/>
            <person name="Iida J."/>
            <person name="Imamura K."/>
            <person name="Itoh M."/>
            <person name="Kato T."/>
            <person name="Kawaji H."/>
            <person name="Kawagashira N."/>
            <person name="Kawashima T."/>
            <person name="Kojima M."/>
            <person name="Kondo S."/>
            <person name="Konno H."/>
            <person name="Nakano K."/>
            <person name="Ninomiya N."/>
            <person name="Nishio T."/>
            <person name="Okada M."/>
            <person name="Plessy C."/>
            <person name="Shibata K."/>
            <person name="Shiraki T."/>
            <person name="Suzuki S."/>
            <person name="Tagami M."/>
            <person name="Waki K."/>
            <person name="Watahiki A."/>
            <person name="Okamura-Oho Y."/>
            <person name="Suzuki H."/>
            <person name="Kawai J."/>
            <person name="Hayashizaki Y."/>
        </authorList>
    </citation>
    <scope>NUCLEOTIDE SEQUENCE [LARGE SCALE MRNA]</scope>
    <source>
        <strain>C57BL/6J</strain>
        <strain>NOD</strain>
        <tissue>Skin</tissue>
        <tissue>Spleen</tissue>
    </source>
</reference>
<reference key="4">
    <citation type="journal article" date="2009" name="PLoS Biol.">
        <title>Lineage-specific biology revealed by a finished genome assembly of the mouse.</title>
        <authorList>
            <person name="Church D.M."/>
            <person name="Goodstadt L."/>
            <person name="Hillier L.W."/>
            <person name="Zody M.C."/>
            <person name="Goldstein S."/>
            <person name="She X."/>
            <person name="Bult C.J."/>
            <person name="Agarwala R."/>
            <person name="Cherry J.L."/>
            <person name="DiCuccio M."/>
            <person name="Hlavina W."/>
            <person name="Kapustin Y."/>
            <person name="Meric P."/>
            <person name="Maglott D."/>
            <person name="Birtle Z."/>
            <person name="Marques A.C."/>
            <person name="Graves T."/>
            <person name="Zhou S."/>
            <person name="Teague B."/>
            <person name="Potamousis K."/>
            <person name="Churas C."/>
            <person name="Place M."/>
            <person name="Herschleb J."/>
            <person name="Runnheim R."/>
            <person name="Forrest D."/>
            <person name="Amos-Landgraf J."/>
            <person name="Schwartz D.C."/>
            <person name="Cheng Z."/>
            <person name="Lindblad-Toh K."/>
            <person name="Eichler E.E."/>
            <person name="Ponting C.P."/>
        </authorList>
    </citation>
    <scope>NUCLEOTIDE SEQUENCE [LARGE SCALE GENOMIC DNA]</scope>
    <source>
        <strain>C57BL/6J</strain>
    </source>
</reference>
<reference key="5">
    <citation type="journal article" date="2004" name="Genome Res.">
        <title>The status, quality, and expansion of the NIH full-length cDNA project: the Mammalian Gene Collection (MGC).</title>
        <authorList>
            <consortium name="The MGC Project Team"/>
        </authorList>
    </citation>
    <scope>NUCLEOTIDE SEQUENCE [LARGE SCALE MRNA]</scope>
    <source>
        <strain>C57BL/6J</strain>
        <strain>FVB/N</strain>
        <tissue>Eye</tissue>
        <tissue>Mammary tumor</tissue>
    </source>
</reference>
<reference key="6">
    <citation type="submission" date="2007-04" db="UniProtKB">
        <authorList>
            <person name="Lubec G."/>
            <person name="Klug S."/>
            <person name="Kang S.U."/>
        </authorList>
    </citation>
    <scope>PROTEIN SEQUENCE OF 36-54; 56-68; 104-112; 119-137; 143-169; 174-208; 211-218; 222-240; 300-328; 349-379 AND 424-447</scope>
    <scope>IDENTIFICATION BY MASS SPECTROMETRY</scope>
    <source>
        <strain>C57BL/6J</strain>
        <tissue>Brain</tissue>
        <tissue>Hippocampus</tissue>
    </source>
</reference>
<reference key="7">
    <citation type="journal article" date="1994" name="Mol. Cell. Biol.">
        <title>Cloning, characterization, and expression of a novel GDP dissociation inhibitor isoform from skeletal muscle.</title>
        <authorList>
            <person name="Shisheva A."/>
            <person name="Suedhof T.C."/>
            <person name="Czech M.P."/>
        </authorList>
    </citation>
    <scope>NUCLEOTIDE SEQUENCE [MRNA] OF 125-447</scope>
    <source>
        <strain>BALB/cJ</strain>
        <tissue>Skeletal muscle</tissue>
    </source>
</reference>
<reference key="8">
    <citation type="journal article" date="2009" name="Biochem. J.">
        <title>GDI-1 preferably interacts with Rab10 in insulin-stimulated GLUT4 translocation.</title>
        <authorList>
            <person name="Chen Y."/>
            <person name="Deng Y."/>
            <person name="Zhang J."/>
            <person name="Yang L."/>
            <person name="Xie X."/>
            <person name="Xu T."/>
        </authorList>
    </citation>
    <scope>INTERACTION WITH RAB10</scope>
</reference>
<reference key="9">
    <citation type="journal article" date="2010" name="Cell">
        <title>A tissue-specific atlas of mouse protein phosphorylation and expression.</title>
        <authorList>
            <person name="Huttlin E.L."/>
            <person name="Jedrychowski M.P."/>
            <person name="Elias J.E."/>
            <person name="Goswami T."/>
            <person name="Rad R."/>
            <person name="Beausoleil S.A."/>
            <person name="Villen J."/>
            <person name="Haas W."/>
            <person name="Sowa M.E."/>
            <person name="Gygi S.P."/>
        </authorList>
    </citation>
    <scope>PHOSPHORYLATION [LARGE SCALE ANALYSIS] AT SER-427</scope>
    <scope>IDENTIFICATION BY MASS SPECTROMETRY [LARGE SCALE ANALYSIS]</scope>
    <source>
        <tissue>Brain</tissue>
        <tissue>Brown adipose tissue</tissue>
        <tissue>Heart</tissue>
        <tissue>Kidney</tissue>
        <tissue>Liver</tissue>
        <tissue>Lung</tissue>
        <tissue>Pancreas</tissue>
        <tissue>Spleen</tissue>
        <tissue>Testis</tissue>
    </source>
</reference>
<feature type="chain" id="PRO_0000056673" description="Rab GDP dissociation inhibitor alpha">
    <location>
        <begin position="1"/>
        <end position="447"/>
    </location>
</feature>
<feature type="modified residue" description="Phosphoserine" evidence="5">
    <location>
        <position position="427"/>
    </location>
</feature>
<feature type="sequence conflict" description="In Ref. 1; AAK49815 and 3; BAE33632/BAE42320." evidence="4" ref="1 3">
    <original>I</original>
    <variation>M</variation>
    <location>
        <position position="58"/>
    </location>
</feature>
<feature type="sequence conflict" description="In Ref. 7; AAB16907." evidence="4" ref="7">
    <original>A</original>
    <variation>R</variation>
    <location>
        <position position="128"/>
    </location>
</feature>
<feature type="sequence conflict" description="In Ref. 1; AAK49815." evidence="4" ref="1">
    <original>N</original>
    <variation>T</variation>
    <location>
        <position position="165"/>
    </location>
</feature>
<feature type="sequence conflict" description="In Ref. 7; AAB16907." evidence="4" ref="7">
    <original>D</original>
    <variation>E</variation>
    <location>
        <position position="196"/>
    </location>
</feature>
<feature type="sequence conflict" description="In Ref. 2; AAL60197." evidence="4" ref="2">
    <original>P</original>
    <variation>S</variation>
    <location>
        <position position="223"/>
    </location>
</feature>
<protein>
    <recommendedName>
        <fullName>Rab GDP dissociation inhibitor alpha</fullName>
        <shortName>Rab GDI alpha</shortName>
    </recommendedName>
    <alternativeName>
        <fullName>Guanosine diphosphate dissociation inhibitor 1</fullName>
        <shortName>GDI-1</shortName>
    </alternativeName>
</protein>
<organism>
    <name type="scientific">Mus musculus</name>
    <name type="common">Mouse</name>
    <dbReference type="NCBI Taxonomy" id="10090"/>
    <lineage>
        <taxon>Eukaryota</taxon>
        <taxon>Metazoa</taxon>
        <taxon>Chordata</taxon>
        <taxon>Craniata</taxon>
        <taxon>Vertebrata</taxon>
        <taxon>Euteleostomi</taxon>
        <taxon>Mammalia</taxon>
        <taxon>Eutheria</taxon>
        <taxon>Euarchontoglires</taxon>
        <taxon>Glires</taxon>
        <taxon>Rodentia</taxon>
        <taxon>Myomorpha</taxon>
        <taxon>Muroidea</taxon>
        <taxon>Muridae</taxon>
        <taxon>Murinae</taxon>
        <taxon>Mus</taxon>
        <taxon>Mus</taxon>
    </lineage>
</organism>
<dbReference type="EMBL" id="AF251042">
    <property type="protein sequence ID" value="AAK49815.1"/>
    <property type="molecule type" value="mRNA"/>
</dbReference>
<dbReference type="EMBL" id="AF441240">
    <property type="protein sequence ID" value="AAL60197.1"/>
    <property type="molecule type" value="Genomic_DNA"/>
</dbReference>
<dbReference type="EMBL" id="AK028880">
    <property type="protein sequence ID" value="BAC26169.1"/>
    <property type="molecule type" value="mRNA"/>
</dbReference>
<dbReference type="EMBL" id="AK156224">
    <property type="protein sequence ID" value="BAE33632.1"/>
    <property type="molecule type" value="mRNA"/>
</dbReference>
<dbReference type="EMBL" id="AK171216">
    <property type="protein sequence ID" value="BAE42320.1"/>
    <property type="molecule type" value="mRNA"/>
</dbReference>
<dbReference type="EMBL" id="AL807376">
    <property type="protein sequence ID" value="CAM24345.1"/>
    <property type="molecule type" value="Genomic_DNA"/>
</dbReference>
<dbReference type="EMBL" id="BC010220">
    <property type="protein sequence ID" value="AAH10220.1"/>
    <property type="molecule type" value="mRNA"/>
</dbReference>
<dbReference type="EMBL" id="BC013758">
    <property type="protein sequence ID" value="AAH13758.1"/>
    <property type="molecule type" value="mRNA"/>
</dbReference>
<dbReference type="EMBL" id="BC037598">
    <property type="protein sequence ID" value="AAH37598.1"/>
    <property type="molecule type" value="mRNA"/>
</dbReference>
<dbReference type="EMBL" id="U07950">
    <property type="protein sequence ID" value="AAB16907.1"/>
    <property type="molecule type" value="mRNA"/>
</dbReference>
<dbReference type="CCDS" id="CCDS30227.1"/>
<dbReference type="PIR" id="C56024">
    <property type="entry name" value="C56024"/>
</dbReference>
<dbReference type="RefSeq" id="NP_034403.1">
    <property type="nucleotide sequence ID" value="NM_010273.4"/>
</dbReference>
<dbReference type="SMR" id="P50396"/>
<dbReference type="BioGRID" id="199890">
    <property type="interactions" value="20"/>
</dbReference>
<dbReference type="FunCoup" id="P50396">
    <property type="interactions" value="1746"/>
</dbReference>
<dbReference type="IntAct" id="P50396">
    <property type="interactions" value="9"/>
</dbReference>
<dbReference type="MINT" id="P50396"/>
<dbReference type="STRING" id="10090.ENSMUSP00000015435"/>
<dbReference type="GlyGen" id="P50396">
    <property type="glycosylation" value="2 sites, 1 N-linked glycan (1 site), 1 O-linked glycan (1 site)"/>
</dbReference>
<dbReference type="iPTMnet" id="P50396"/>
<dbReference type="PhosphoSitePlus" id="P50396"/>
<dbReference type="SwissPalm" id="P50396"/>
<dbReference type="jPOST" id="P50396"/>
<dbReference type="PaxDb" id="10090-ENSMUSP00000015435"/>
<dbReference type="PeptideAtlas" id="P50396"/>
<dbReference type="ProteomicsDB" id="271207"/>
<dbReference type="Pumba" id="P50396"/>
<dbReference type="Antibodypedia" id="4564">
    <property type="antibodies" value="400 antibodies from 33 providers"/>
</dbReference>
<dbReference type="DNASU" id="14567"/>
<dbReference type="Ensembl" id="ENSMUST00000015435.11">
    <property type="protein sequence ID" value="ENSMUSP00000015435.5"/>
    <property type="gene ID" value="ENSMUSG00000015291.11"/>
</dbReference>
<dbReference type="GeneID" id="14567"/>
<dbReference type="KEGG" id="mmu:14567"/>
<dbReference type="UCSC" id="uc009tom.2">
    <property type="organism name" value="mouse"/>
</dbReference>
<dbReference type="AGR" id="MGI:99846"/>
<dbReference type="CTD" id="2664"/>
<dbReference type="MGI" id="MGI:99846">
    <property type="gene designation" value="Gdi1"/>
</dbReference>
<dbReference type="VEuPathDB" id="HostDB:ENSMUSG00000015291"/>
<dbReference type="eggNOG" id="KOG1439">
    <property type="taxonomic scope" value="Eukaryota"/>
</dbReference>
<dbReference type="GeneTree" id="ENSGT00950000182994"/>
<dbReference type="HOGENOM" id="CLU_021695_0_0_1"/>
<dbReference type="InParanoid" id="P50396"/>
<dbReference type="OMA" id="GRICKVP"/>
<dbReference type="OrthoDB" id="9446342at2759"/>
<dbReference type="PhylomeDB" id="P50396"/>
<dbReference type="TreeFam" id="TF300449"/>
<dbReference type="Reactome" id="R-MMU-8876198">
    <property type="pathway name" value="RAB GEFs exchange GTP for GDP on RABs"/>
</dbReference>
<dbReference type="BioGRID-ORCS" id="14567">
    <property type="hits" value="1 hit in 78 CRISPR screens"/>
</dbReference>
<dbReference type="CD-CODE" id="CE726F99">
    <property type="entry name" value="Postsynaptic density"/>
</dbReference>
<dbReference type="ChiTaRS" id="Gdi1">
    <property type="organism name" value="mouse"/>
</dbReference>
<dbReference type="PRO" id="PR:P50396"/>
<dbReference type="Proteomes" id="UP000000589">
    <property type="component" value="Chromosome X"/>
</dbReference>
<dbReference type="RNAct" id="P50396">
    <property type="molecule type" value="protein"/>
</dbReference>
<dbReference type="Bgee" id="ENSMUSG00000015291">
    <property type="expression patterns" value="Expressed in embryonic brain and 262 other cell types or tissues"/>
</dbReference>
<dbReference type="ExpressionAtlas" id="P50396">
    <property type="expression patterns" value="baseline and differential"/>
</dbReference>
<dbReference type="GO" id="GO:0030424">
    <property type="term" value="C:axon"/>
    <property type="evidence" value="ECO:0007669"/>
    <property type="project" value="Ensembl"/>
</dbReference>
<dbReference type="GO" id="GO:0005783">
    <property type="term" value="C:endoplasmic reticulum"/>
    <property type="evidence" value="ECO:0007669"/>
    <property type="project" value="Ensembl"/>
</dbReference>
<dbReference type="GO" id="GO:0005794">
    <property type="term" value="C:Golgi apparatus"/>
    <property type="evidence" value="ECO:0007669"/>
    <property type="project" value="UniProtKB-SubCell"/>
</dbReference>
<dbReference type="GO" id="GO:0030496">
    <property type="term" value="C:midbody"/>
    <property type="evidence" value="ECO:0007669"/>
    <property type="project" value="Ensembl"/>
</dbReference>
<dbReference type="GO" id="GO:0043209">
    <property type="term" value="C:myelin sheath"/>
    <property type="evidence" value="ECO:0007005"/>
    <property type="project" value="UniProtKB"/>
</dbReference>
<dbReference type="GO" id="GO:0043025">
    <property type="term" value="C:neuronal cell body"/>
    <property type="evidence" value="ECO:0007669"/>
    <property type="project" value="Ensembl"/>
</dbReference>
<dbReference type="GO" id="GO:0099523">
    <property type="term" value="C:presynaptic cytosol"/>
    <property type="evidence" value="ECO:0007669"/>
    <property type="project" value="Ensembl"/>
</dbReference>
<dbReference type="GO" id="GO:0032991">
    <property type="term" value="C:protein-containing complex"/>
    <property type="evidence" value="ECO:0007669"/>
    <property type="project" value="Ensembl"/>
</dbReference>
<dbReference type="GO" id="GO:0005096">
    <property type="term" value="F:GTPase activator activity"/>
    <property type="evidence" value="ECO:0007669"/>
    <property type="project" value="UniProtKB-KW"/>
</dbReference>
<dbReference type="GO" id="GO:0005093">
    <property type="term" value="F:Rab GDP-dissociation inhibitor activity"/>
    <property type="evidence" value="ECO:0000250"/>
    <property type="project" value="UniProtKB"/>
</dbReference>
<dbReference type="GO" id="GO:0031267">
    <property type="term" value="F:small GTPase binding"/>
    <property type="evidence" value="ECO:0007669"/>
    <property type="project" value="Ensembl"/>
</dbReference>
<dbReference type="GO" id="GO:0050771">
    <property type="term" value="P:negative regulation of axonogenesis"/>
    <property type="evidence" value="ECO:0000250"/>
    <property type="project" value="UniProtKB"/>
</dbReference>
<dbReference type="GO" id="GO:0090315">
    <property type="term" value="P:negative regulation of protein targeting to membrane"/>
    <property type="evidence" value="ECO:0000250"/>
    <property type="project" value="UniProtKB"/>
</dbReference>
<dbReference type="GO" id="GO:0045773">
    <property type="term" value="P:positive regulation of axon extension"/>
    <property type="evidence" value="ECO:0007669"/>
    <property type="project" value="Ensembl"/>
</dbReference>
<dbReference type="GO" id="GO:0034123">
    <property type="term" value="P:positive regulation of toll-like receptor signaling pathway"/>
    <property type="evidence" value="ECO:0007669"/>
    <property type="project" value="Ensembl"/>
</dbReference>
<dbReference type="GO" id="GO:0015031">
    <property type="term" value="P:protein transport"/>
    <property type="evidence" value="ECO:0007669"/>
    <property type="project" value="InterPro"/>
</dbReference>
<dbReference type="GO" id="GO:0032482">
    <property type="term" value="P:Rab protein signal transduction"/>
    <property type="evidence" value="ECO:0000250"/>
    <property type="project" value="UniProtKB"/>
</dbReference>
<dbReference type="GO" id="GO:0051592">
    <property type="term" value="P:response to calcium ion"/>
    <property type="evidence" value="ECO:0007669"/>
    <property type="project" value="Ensembl"/>
</dbReference>
<dbReference type="FunFam" id="1.10.405.10:FF:000001">
    <property type="entry name" value="Rab GDP dissociation inhibitor"/>
    <property type="match status" value="1"/>
</dbReference>
<dbReference type="FunFam" id="3.30.519.10:FF:000005">
    <property type="entry name" value="Rab GDP dissociation inhibitor"/>
    <property type="match status" value="1"/>
</dbReference>
<dbReference type="FunFam" id="3.30.519.10:FF:000014">
    <property type="entry name" value="Rab GDP dissociation inhibitor"/>
    <property type="match status" value="1"/>
</dbReference>
<dbReference type="FunFam" id="3.50.50.60:FF:000158">
    <property type="entry name" value="Rab GDP dissociation inhibitor"/>
    <property type="match status" value="1"/>
</dbReference>
<dbReference type="FunFam" id="3.50.50.60:FF:000232">
    <property type="entry name" value="Rab GDP dissociation inhibitor"/>
    <property type="match status" value="1"/>
</dbReference>
<dbReference type="Gene3D" id="3.50.50.60">
    <property type="entry name" value="FAD/NAD(P)-binding domain"/>
    <property type="match status" value="1"/>
</dbReference>
<dbReference type="Gene3D" id="1.10.405.10">
    <property type="entry name" value="Guanine Nucleotide Dissociation Inhibitor, domain 1"/>
    <property type="match status" value="1"/>
</dbReference>
<dbReference type="Gene3D" id="3.30.519.10">
    <property type="entry name" value="Guanine Nucleotide Dissociation Inhibitor, domain 2"/>
    <property type="match status" value="1"/>
</dbReference>
<dbReference type="InterPro" id="IPR036188">
    <property type="entry name" value="FAD/NAD-bd_sf"/>
</dbReference>
<dbReference type="InterPro" id="IPR018203">
    <property type="entry name" value="GDP_dissociation_inhibitor"/>
</dbReference>
<dbReference type="InterPro" id="IPR000806">
    <property type="entry name" value="RabGDI"/>
</dbReference>
<dbReference type="PANTHER" id="PTHR11787:SF3">
    <property type="entry name" value="RAB GDP DISSOCIATION INHIBITOR ALPHA"/>
    <property type="match status" value="1"/>
</dbReference>
<dbReference type="PANTHER" id="PTHR11787">
    <property type="entry name" value="RAB GDP-DISSOCIATION INHIBITOR"/>
    <property type="match status" value="1"/>
</dbReference>
<dbReference type="Pfam" id="PF00996">
    <property type="entry name" value="GDI"/>
    <property type="match status" value="1"/>
</dbReference>
<dbReference type="PRINTS" id="PR00892">
    <property type="entry name" value="RABGDI"/>
</dbReference>
<dbReference type="PRINTS" id="PR00891">
    <property type="entry name" value="RABGDIREP"/>
</dbReference>
<dbReference type="SUPFAM" id="SSF51905">
    <property type="entry name" value="FAD/NAD(P)-binding domain"/>
    <property type="match status" value="2"/>
</dbReference>
<proteinExistence type="evidence at protein level"/>
<comment type="function">
    <text>Regulates the GDP/GTP exchange reaction of most Rab proteins by inhibiting the dissociation of GDP from them, and the subsequent binding of GTP to them. Promotes the dissociation of GDP-bound Rab proteins from the membrane and inhibits their activation. Promotes the dissociation of RAB1A, RAB3A, RAB5A and RAB10 from membranes.</text>
</comment>
<comment type="subunit">
    <text evidence="2 3">Interacts with RHOH (By similarity). Interacts with the non-phosphorylated forms of RAB1A, RAB3A, RAB5A, RAB5B, RAB5C, RAB8A, RAB8B, RAB12, RAB35, and RAB43 (By similarity). Interacts with RAB10 (PubMed:19570034).</text>
</comment>
<comment type="subcellular location">
    <subcellularLocation>
        <location evidence="1">Cytoplasm</location>
    </subcellularLocation>
    <subcellularLocation>
        <location evidence="1">Golgi apparatus</location>
        <location evidence="1">trans-Golgi network</location>
    </subcellularLocation>
</comment>
<comment type="tissue specificity">
    <text>High expression in brain, lower in other tissues.</text>
</comment>
<comment type="similarity">
    <text evidence="4">Belongs to the Rab GDI family.</text>
</comment>
<gene>
    <name type="primary">Gdi1</name>
    <name type="synonym">Rabgdia</name>
</gene>
<evidence type="ECO:0000250" key="1"/>
<evidence type="ECO:0000250" key="2">
    <source>
        <dbReference type="UniProtKB" id="P31150"/>
    </source>
</evidence>
<evidence type="ECO:0000269" key="3">
    <source>
    </source>
</evidence>
<evidence type="ECO:0000305" key="4"/>
<evidence type="ECO:0007744" key="5">
    <source>
    </source>
</evidence>
<name>GDIA_MOUSE</name>
<keyword id="KW-0963">Cytoplasm</keyword>
<keyword id="KW-0903">Direct protein sequencing</keyword>
<keyword id="KW-0333">Golgi apparatus</keyword>
<keyword id="KW-0343">GTPase activation</keyword>
<keyword id="KW-0597">Phosphoprotein</keyword>
<keyword id="KW-1185">Reference proteome</keyword>